<reference key="1">
    <citation type="journal article" date="2000" name="Nature">
        <title>Sequence and analysis of chromosome 1 of the plant Arabidopsis thaliana.</title>
        <authorList>
            <person name="Theologis A."/>
            <person name="Ecker J.R."/>
            <person name="Palm C.J."/>
            <person name="Federspiel N.A."/>
            <person name="Kaul S."/>
            <person name="White O."/>
            <person name="Alonso J."/>
            <person name="Altafi H."/>
            <person name="Araujo R."/>
            <person name="Bowman C.L."/>
            <person name="Brooks S.Y."/>
            <person name="Buehler E."/>
            <person name="Chan A."/>
            <person name="Chao Q."/>
            <person name="Chen H."/>
            <person name="Cheuk R.F."/>
            <person name="Chin C.W."/>
            <person name="Chung M.K."/>
            <person name="Conn L."/>
            <person name="Conway A.B."/>
            <person name="Conway A.R."/>
            <person name="Creasy T.H."/>
            <person name="Dewar K."/>
            <person name="Dunn P."/>
            <person name="Etgu P."/>
            <person name="Feldblyum T.V."/>
            <person name="Feng J.-D."/>
            <person name="Fong B."/>
            <person name="Fujii C.Y."/>
            <person name="Gill J.E."/>
            <person name="Goldsmith A.D."/>
            <person name="Haas B."/>
            <person name="Hansen N.F."/>
            <person name="Hughes B."/>
            <person name="Huizar L."/>
            <person name="Hunter J.L."/>
            <person name="Jenkins J."/>
            <person name="Johnson-Hopson C."/>
            <person name="Khan S."/>
            <person name="Khaykin E."/>
            <person name="Kim C.J."/>
            <person name="Koo H.L."/>
            <person name="Kremenetskaia I."/>
            <person name="Kurtz D.B."/>
            <person name="Kwan A."/>
            <person name="Lam B."/>
            <person name="Langin-Hooper S."/>
            <person name="Lee A."/>
            <person name="Lee J.M."/>
            <person name="Lenz C.A."/>
            <person name="Li J.H."/>
            <person name="Li Y.-P."/>
            <person name="Lin X."/>
            <person name="Liu S.X."/>
            <person name="Liu Z.A."/>
            <person name="Luros J.S."/>
            <person name="Maiti R."/>
            <person name="Marziali A."/>
            <person name="Militscher J."/>
            <person name="Miranda M."/>
            <person name="Nguyen M."/>
            <person name="Nierman W.C."/>
            <person name="Osborne B.I."/>
            <person name="Pai G."/>
            <person name="Peterson J."/>
            <person name="Pham P.K."/>
            <person name="Rizzo M."/>
            <person name="Rooney T."/>
            <person name="Rowley D."/>
            <person name="Sakano H."/>
            <person name="Salzberg S.L."/>
            <person name="Schwartz J.R."/>
            <person name="Shinn P."/>
            <person name="Southwick A.M."/>
            <person name="Sun H."/>
            <person name="Tallon L.J."/>
            <person name="Tambunga G."/>
            <person name="Toriumi M.J."/>
            <person name="Town C.D."/>
            <person name="Utterback T."/>
            <person name="Van Aken S."/>
            <person name="Vaysberg M."/>
            <person name="Vysotskaia V.S."/>
            <person name="Walker M."/>
            <person name="Wu D."/>
            <person name="Yu G."/>
            <person name="Fraser C.M."/>
            <person name="Venter J.C."/>
            <person name="Davis R.W."/>
        </authorList>
    </citation>
    <scope>NUCLEOTIDE SEQUENCE [LARGE SCALE GENOMIC DNA]</scope>
    <source>
        <strain>cv. Columbia</strain>
    </source>
</reference>
<reference key="2">
    <citation type="journal article" date="2017" name="Plant J.">
        <title>Araport11: a complete reannotation of the Arabidopsis thaliana reference genome.</title>
        <authorList>
            <person name="Cheng C.Y."/>
            <person name="Krishnakumar V."/>
            <person name="Chan A.P."/>
            <person name="Thibaud-Nissen F."/>
            <person name="Schobel S."/>
            <person name="Town C.D."/>
        </authorList>
    </citation>
    <scope>GENOME REANNOTATION</scope>
    <source>
        <strain>cv. Columbia</strain>
    </source>
</reference>
<reference key="3">
    <citation type="journal article" date="2003" name="Science">
        <title>Empirical analysis of transcriptional activity in the Arabidopsis genome.</title>
        <authorList>
            <person name="Yamada K."/>
            <person name="Lim J."/>
            <person name="Dale J.M."/>
            <person name="Chen H."/>
            <person name="Shinn P."/>
            <person name="Palm C.J."/>
            <person name="Southwick A.M."/>
            <person name="Wu H.C."/>
            <person name="Kim C.J."/>
            <person name="Nguyen M."/>
            <person name="Pham P.K."/>
            <person name="Cheuk R.F."/>
            <person name="Karlin-Newmann G."/>
            <person name="Liu S.X."/>
            <person name="Lam B."/>
            <person name="Sakano H."/>
            <person name="Wu T."/>
            <person name="Yu G."/>
            <person name="Miranda M."/>
            <person name="Quach H.L."/>
            <person name="Tripp M."/>
            <person name="Chang C.H."/>
            <person name="Lee J.M."/>
            <person name="Toriumi M.J."/>
            <person name="Chan M.M."/>
            <person name="Tang C.C."/>
            <person name="Onodera C.S."/>
            <person name="Deng J.M."/>
            <person name="Akiyama K."/>
            <person name="Ansari Y."/>
            <person name="Arakawa T."/>
            <person name="Banh J."/>
            <person name="Banno F."/>
            <person name="Bowser L."/>
            <person name="Brooks S.Y."/>
            <person name="Carninci P."/>
            <person name="Chao Q."/>
            <person name="Choy N."/>
            <person name="Enju A."/>
            <person name="Goldsmith A.D."/>
            <person name="Gurjal M."/>
            <person name="Hansen N.F."/>
            <person name="Hayashizaki Y."/>
            <person name="Johnson-Hopson C."/>
            <person name="Hsuan V.W."/>
            <person name="Iida K."/>
            <person name="Karnes M."/>
            <person name="Khan S."/>
            <person name="Koesema E."/>
            <person name="Ishida J."/>
            <person name="Jiang P.X."/>
            <person name="Jones T."/>
            <person name="Kawai J."/>
            <person name="Kamiya A."/>
            <person name="Meyers C."/>
            <person name="Nakajima M."/>
            <person name="Narusaka M."/>
            <person name="Seki M."/>
            <person name="Sakurai T."/>
            <person name="Satou M."/>
            <person name="Tamse R."/>
            <person name="Vaysberg M."/>
            <person name="Wallender E.K."/>
            <person name="Wong C."/>
            <person name="Yamamura Y."/>
            <person name="Yuan S."/>
            <person name="Shinozaki K."/>
            <person name="Davis R.W."/>
            <person name="Theologis A."/>
            <person name="Ecker J.R."/>
        </authorList>
    </citation>
    <scope>NUCLEOTIDE SEQUENCE [LARGE SCALE MRNA]</scope>
    <source>
        <strain>cv. Columbia</strain>
    </source>
</reference>
<reference key="4">
    <citation type="submission" date="2004-09" db="EMBL/GenBank/DDBJ databases">
        <title>Large-scale analysis of RIKEN Arabidopsis full-length (RAFL) cDNAs.</title>
        <authorList>
            <person name="Totoki Y."/>
            <person name="Seki M."/>
            <person name="Ishida J."/>
            <person name="Nakajima M."/>
            <person name="Enju A."/>
            <person name="Kamiya A."/>
            <person name="Narusaka M."/>
            <person name="Shin-i T."/>
            <person name="Nakagawa M."/>
            <person name="Sakamoto N."/>
            <person name="Oishi K."/>
            <person name="Kohara Y."/>
            <person name="Kobayashi M."/>
            <person name="Toyoda A."/>
            <person name="Sakaki Y."/>
            <person name="Sakurai T."/>
            <person name="Iida K."/>
            <person name="Akiyama K."/>
            <person name="Satou M."/>
            <person name="Toyoda T."/>
            <person name="Konagaya A."/>
            <person name="Carninci P."/>
            <person name="Kawai J."/>
            <person name="Hayashizaki Y."/>
            <person name="Shinozaki K."/>
        </authorList>
    </citation>
    <scope>NUCLEOTIDE SEQUENCE [LARGE SCALE MRNA]</scope>
    <source>
        <strain>cv. Columbia</strain>
    </source>
</reference>
<reference key="5">
    <citation type="journal article" date="2007" name="Plant Cell Physiol.">
        <title>Functional classification of Arabidopsis peroxisome biogenesis factors proposed from analyses of knockdown mutants.</title>
        <authorList>
            <person name="Nito K."/>
            <person name="Kamigaki A."/>
            <person name="Kondo M."/>
            <person name="Hayashi M."/>
            <person name="Nishimura M."/>
        </authorList>
    </citation>
    <scope>FUNCTION</scope>
    <scope>IDENTIFICATION</scope>
</reference>
<comment type="function">
    <text evidence="3">Involved in morphology determination of peroxisomes, but not in import of peroxisomal matrix proteins. May act as a docking factor for PEX19 and be necessary for the import of peroxisomal membrane proteins in the peroxisomes.</text>
</comment>
<comment type="subcellular location">
    <subcellularLocation>
        <location evidence="1">Peroxisome membrane</location>
        <topology evidence="1">Single-pass membrane protein</topology>
    </subcellularLocation>
</comment>
<comment type="alternative products">
    <event type="alternative splicing"/>
    <isoform>
        <id>Q8S9K7-1</id>
        <name>1</name>
        <sequence type="displayed"/>
    </isoform>
    <text>A number of isoforms are produced. According to EST sequences.</text>
</comment>
<comment type="similarity">
    <text evidence="4">Belongs to the peroxin-3 family.</text>
</comment>
<comment type="sequence caution" evidence="4">
    <conflict type="erroneous gene model prediction">
        <sequence resource="EMBL-CDS" id="AAG50845"/>
    </conflict>
</comment>
<protein>
    <recommendedName>
        <fullName>Peroxisome biogenesis protein 3-2</fullName>
    </recommendedName>
    <alternativeName>
        <fullName>Peroxin-3-2</fullName>
        <shortName>AtPEX3-2</shortName>
    </alternativeName>
</protein>
<keyword id="KW-0025">Alternative splicing</keyword>
<keyword id="KW-0175">Coiled coil</keyword>
<keyword id="KW-0472">Membrane</keyword>
<keyword id="KW-0576">Peroxisome</keyword>
<keyword id="KW-0962">Peroxisome biogenesis</keyword>
<keyword id="KW-0653">Protein transport</keyword>
<keyword id="KW-1185">Reference proteome</keyword>
<keyword id="KW-0812">Transmembrane</keyword>
<keyword id="KW-1133">Transmembrane helix</keyword>
<keyword id="KW-0813">Transport</keyword>
<evidence type="ECO:0000250" key="1"/>
<evidence type="ECO:0000255" key="2"/>
<evidence type="ECO:0000269" key="3">
    <source>
    </source>
</evidence>
<evidence type="ECO:0000305" key="4"/>
<accession>Q8S9K7</accession>
<accession>Q9C6X6</accession>
<sequence>MDFVRGFWRKHRRKVLVTAGCLGSGYLLYKLYNSHTRRLADLERELAHERENDEIIKTQMKAHFESIQMIVDSTTLPHAMQFLSIRISEEIDVSHVMDRLNQGKGMLSPPEKLQLWDELKILSFTRMVLSLWSVTMLSLYIRVQVNILGRHLYVDTARALGSSHLLEEVDLIDRDDEQKFLSSADFLVTNAMPSLISDMQGSAEEVLKGKQLKDVITTRVLQETVMQIVDVFMSTGSPHHWVDYLMMPQDTKLSRTTSDSSDEAVSKFHQLMVETREVLISTEFTNIVEISLKCFTDVLVEEMETQTEAGGLATGKPLAKVLPQIEKTMNVITAEPSKNRFLQIIRDLPEVKLFFTLLYANMPQ</sequence>
<dbReference type="EMBL" id="AC074308">
    <property type="protein sequence ID" value="AAG50845.1"/>
    <property type="status" value="ALT_SEQ"/>
    <property type="molecule type" value="Genomic_DNA"/>
</dbReference>
<dbReference type="EMBL" id="CP002684">
    <property type="protein sequence ID" value="AEE32330.1"/>
    <property type="molecule type" value="Genomic_DNA"/>
</dbReference>
<dbReference type="EMBL" id="AY074860">
    <property type="protein sequence ID" value="AAL75911.1"/>
    <property type="molecule type" value="mRNA"/>
</dbReference>
<dbReference type="EMBL" id="AY124818">
    <property type="protein sequence ID" value="AAM70527.1"/>
    <property type="molecule type" value="mRNA"/>
</dbReference>
<dbReference type="EMBL" id="AK175341">
    <property type="protein sequence ID" value="BAD43104.1"/>
    <property type="molecule type" value="mRNA"/>
</dbReference>
<dbReference type="RefSeq" id="NP_683410.1">
    <molecule id="Q8S9K7-1"/>
    <property type="nucleotide sequence ID" value="NM_148569.5"/>
</dbReference>
<dbReference type="SMR" id="Q8S9K7"/>
<dbReference type="BioGRID" id="26510">
    <property type="interactions" value="2"/>
</dbReference>
<dbReference type="FunCoup" id="Q8S9K7">
    <property type="interactions" value="3528"/>
</dbReference>
<dbReference type="STRING" id="3702.Q8S9K7"/>
<dbReference type="iPTMnet" id="Q8S9K7"/>
<dbReference type="PaxDb" id="3702-AT1G48635.2"/>
<dbReference type="ProteomicsDB" id="251245">
    <molecule id="Q8S9K7-1"/>
</dbReference>
<dbReference type="EnsemblPlants" id="AT1G48635.1">
    <molecule id="Q8S9K7-1"/>
    <property type="protein sequence ID" value="AT1G48635.1"/>
    <property type="gene ID" value="AT1G48635"/>
</dbReference>
<dbReference type="GeneID" id="841285"/>
<dbReference type="Gramene" id="AT1G48635.1">
    <molecule id="Q8S9K7-1"/>
    <property type="protein sequence ID" value="AT1G48635.1"/>
    <property type="gene ID" value="AT1G48635"/>
</dbReference>
<dbReference type="KEGG" id="ath:AT1G48635"/>
<dbReference type="Araport" id="AT1G48635"/>
<dbReference type="TAIR" id="AT1G48635">
    <property type="gene designation" value="PEX3"/>
</dbReference>
<dbReference type="eggNOG" id="KOG4444">
    <property type="taxonomic scope" value="Eukaryota"/>
</dbReference>
<dbReference type="InParanoid" id="Q8S9K7"/>
<dbReference type="OMA" id="MHFLRSR"/>
<dbReference type="PhylomeDB" id="Q8S9K7"/>
<dbReference type="PRO" id="PR:Q8S9K7"/>
<dbReference type="Proteomes" id="UP000006548">
    <property type="component" value="Chromosome 1"/>
</dbReference>
<dbReference type="ExpressionAtlas" id="Q8S9K7">
    <property type="expression patterns" value="baseline and differential"/>
</dbReference>
<dbReference type="GO" id="GO:0005778">
    <property type="term" value="C:peroxisomal membrane"/>
    <property type="evidence" value="ECO:0007669"/>
    <property type="project" value="UniProtKB-SubCell"/>
</dbReference>
<dbReference type="GO" id="GO:0007031">
    <property type="term" value="P:peroxisome organization"/>
    <property type="evidence" value="ECO:0007669"/>
    <property type="project" value="UniProtKB-KW"/>
</dbReference>
<dbReference type="GO" id="GO:0015031">
    <property type="term" value="P:protein transport"/>
    <property type="evidence" value="ECO:0007669"/>
    <property type="project" value="UniProtKB-KW"/>
</dbReference>
<dbReference type="InterPro" id="IPR006966">
    <property type="entry name" value="Peroxin-3"/>
</dbReference>
<dbReference type="PANTHER" id="PTHR28080">
    <property type="entry name" value="PEROXISOMAL BIOGENESIS FACTOR 3"/>
    <property type="match status" value="1"/>
</dbReference>
<dbReference type="PANTHER" id="PTHR28080:SF1">
    <property type="entry name" value="PEROXISOMAL BIOGENESIS FACTOR 3"/>
    <property type="match status" value="1"/>
</dbReference>
<dbReference type="Pfam" id="PF04882">
    <property type="entry name" value="Peroxin-3"/>
    <property type="match status" value="1"/>
</dbReference>
<organism>
    <name type="scientific">Arabidopsis thaliana</name>
    <name type="common">Mouse-ear cress</name>
    <dbReference type="NCBI Taxonomy" id="3702"/>
    <lineage>
        <taxon>Eukaryota</taxon>
        <taxon>Viridiplantae</taxon>
        <taxon>Streptophyta</taxon>
        <taxon>Embryophyta</taxon>
        <taxon>Tracheophyta</taxon>
        <taxon>Spermatophyta</taxon>
        <taxon>Magnoliopsida</taxon>
        <taxon>eudicotyledons</taxon>
        <taxon>Gunneridae</taxon>
        <taxon>Pentapetalae</taxon>
        <taxon>rosids</taxon>
        <taxon>malvids</taxon>
        <taxon>Brassicales</taxon>
        <taxon>Brassicaceae</taxon>
        <taxon>Camelineae</taxon>
        <taxon>Arabidopsis</taxon>
    </lineage>
</organism>
<proteinExistence type="evidence at transcript level"/>
<gene>
    <name type="primary">PEX3-2</name>
    <name type="ordered locus">At1g48635</name>
    <name type="ORF">F11I4.17</name>
    <name type="ORF">F9P7.1</name>
</gene>
<name>PEX32_ARATH</name>
<feature type="chain" id="PRO_0000404528" description="Peroxisome biogenesis protein 3-2">
    <location>
        <begin position="1"/>
        <end position="364"/>
    </location>
</feature>
<feature type="transmembrane region" description="Helical" evidence="2">
    <location>
        <begin position="15"/>
        <end position="32"/>
    </location>
</feature>
<feature type="coiled-coil region" evidence="2">
    <location>
        <begin position="33"/>
        <end position="62"/>
    </location>
</feature>